<reference evidence="4" key="1">
    <citation type="journal article" date="2010" name="J. Agric. Food Chem.">
        <title>Primary structure of potential allergenic proteins in emu (Dromaius novaehollandiae) egg white.</title>
        <authorList>
            <person name="Maehashi K."/>
            <person name="Matano M."/>
            <person name="Irisawa T."/>
            <person name="Uchino M."/>
            <person name="Itagaki Y."/>
            <person name="Takano K."/>
            <person name="Kashiwagi Y."/>
            <person name="Watanabe T."/>
        </authorList>
    </citation>
    <scope>PROTEIN SEQUENCE</scope>
    <source>
        <tissue evidence="2">Egg white</tissue>
    </source>
</reference>
<accession>P86384</accession>
<sequence length="19" mass="1900">TKSPDCGGILSPSGLSYFA</sequence>
<organism>
    <name type="scientific">Dromaius novaehollandiae</name>
    <name type="common">Emu</name>
    <dbReference type="NCBI Taxonomy" id="8790"/>
    <lineage>
        <taxon>Eukaryota</taxon>
        <taxon>Metazoa</taxon>
        <taxon>Chordata</taxon>
        <taxon>Craniata</taxon>
        <taxon>Vertebrata</taxon>
        <taxon>Euteleostomi</taxon>
        <taxon>Archelosauria</taxon>
        <taxon>Archosauria</taxon>
        <taxon>Dinosauria</taxon>
        <taxon>Saurischia</taxon>
        <taxon>Theropoda</taxon>
        <taxon>Coelurosauria</taxon>
        <taxon>Aves</taxon>
        <taxon>Palaeognathae</taxon>
        <taxon>Casuariiformes</taxon>
        <taxon>Dromaiidae</taxon>
        <taxon>Dromaius</taxon>
    </lineage>
</organism>
<feature type="chain" id="PRO_0000410705" description="Tenp protein">
    <location>
        <begin position="1"/>
        <end position="19" status="greater than"/>
    </location>
</feature>
<feature type="non-terminal residue" evidence="3">
    <location>
        <position position="19"/>
    </location>
</feature>
<dbReference type="Proteomes" id="UP000694423">
    <property type="component" value="Unplaced"/>
</dbReference>
<comment type="function">
    <text evidence="1">May play a role in the developmental transition from cell proliferation to cell differentiation during neurogenesis.</text>
</comment>
<evidence type="ECO:0000250" key="1">
    <source>
        <dbReference type="UniProtKB" id="O42273"/>
    </source>
</evidence>
<evidence type="ECO:0000269" key="2">
    <source>
    </source>
</evidence>
<evidence type="ECO:0000303" key="3">
    <source>
    </source>
</evidence>
<evidence type="ECO:0000305" key="4"/>
<name>TENP_DRONO</name>
<keyword id="KW-0217">Developmental protein</keyword>
<keyword id="KW-0903">Direct protein sequencing</keyword>
<protein>
    <recommendedName>
        <fullName evidence="3">Tenp protein</fullName>
    </recommendedName>
</protein>
<proteinExistence type="evidence at protein level"/>